<dbReference type="EC" id="2.4.2.18" evidence="1"/>
<dbReference type="EMBL" id="CP001173">
    <property type="protein sequence ID" value="ACI27974.1"/>
    <property type="molecule type" value="Genomic_DNA"/>
</dbReference>
<dbReference type="RefSeq" id="WP_000651805.1">
    <property type="nucleotide sequence ID" value="NC_011333.1"/>
</dbReference>
<dbReference type="SMR" id="B5Z8S5"/>
<dbReference type="KEGG" id="hpg:HPG27_1226"/>
<dbReference type="HOGENOM" id="CLU_034315_2_1_7"/>
<dbReference type="UniPathway" id="UPA00035">
    <property type="reaction ID" value="UER00041"/>
</dbReference>
<dbReference type="Proteomes" id="UP000001735">
    <property type="component" value="Chromosome"/>
</dbReference>
<dbReference type="GO" id="GO:0005829">
    <property type="term" value="C:cytosol"/>
    <property type="evidence" value="ECO:0007669"/>
    <property type="project" value="TreeGrafter"/>
</dbReference>
<dbReference type="GO" id="GO:0004048">
    <property type="term" value="F:anthranilate phosphoribosyltransferase activity"/>
    <property type="evidence" value="ECO:0007669"/>
    <property type="project" value="UniProtKB-UniRule"/>
</dbReference>
<dbReference type="GO" id="GO:0000287">
    <property type="term" value="F:magnesium ion binding"/>
    <property type="evidence" value="ECO:0007669"/>
    <property type="project" value="UniProtKB-UniRule"/>
</dbReference>
<dbReference type="GO" id="GO:0000162">
    <property type="term" value="P:L-tryptophan biosynthetic process"/>
    <property type="evidence" value="ECO:0007669"/>
    <property type="project" value="UniProtKB-UniRule"/>
</dbReference>
<dbReference type="FunFam" id="3.40.1030.10:FF:000002">
    <property type="entry name" value="Anthranilate phosphoribosyltransferase"/>
    <property type="match status" value="1"/>
</dbReference>
<dbReference type="Gene3D" id="3.40.1030.10">
    <property type="entry name" value="Nucleoside phosphorylase/phosphoribosyltransferase catalytic domain"/>
    <property type="match status" value="1"/>
</dbReference>
<dbReference type="Gene3D" id="1.20.970.10">
    <property type="entry name" value="Transferase, Pyrimidine Nucleoside Phosphorylase, Chain C"/>
    <property type="match status" value="1"/>
</dbReference>
<dbReference type="HAMAP" id="MF_00211">
    <property type="entry name" value="TrpD"/>
    <property type="match status" value="1"/>
</dbReference>
<dbReference type="InterPro" id="IPR005940">
    <property type="entry name" value="Anthranilate_Pribosyl_Tfrase"/>
</dbReference>
<dbReference type="InterPro" id="IPR000312">
    <property type="entry name" value="Glycosyl_Trfase_fam3"/>
</dbReference>
<dbReference type="InterPro" id="IPR017459">
    <property type="entry name" value="Glycosyl_Trfase_fam3_N_dom"/>
</dbReference>
<dbReference type="InterPro" id="IPR036320">
    <property type="entry name" value="Glycosyl_Trfase_fam3_N_dom_sf"/>
</dbReference>
<dbReference type="InterPro" id="IPR035902">
    <property type="entry name" value="Nuc_phospho_transferase"/>
</dbReference>
<dbReference type="NCBIfam" id="TIGR01245">
    <property type="entry name" value="trpD"/>
    <property type="match status" value="1"/>
</dbReference>
<dbReference type="PANTHER" id="PTHR43285">
    <property type="entry name" value="ANTHRANILATE PHOSPHORIBOSYLTRANSFERASE"/>
    <property type="match status" value="1"/>
</dbReference>
<dbReference type="PANTHER" id="PTHR43285:SF2">
    <property type="entry name" value="ANTHRANILATE PHOSPHORIBOSYLTRANSFERASE"/>
    <property type="match status" value="1"/>
</dbReference>
<dbReference type="Pfam" id="PF02885">
    <property type="entry name" value="Glycos_trans_3N"/>
    <property type="match status" value="1"/>
</dbReference>
<dbReference type="Pfam" id="PF00591">
    <property type="entry name" value="Glycos_transf_3"/>
    <property type="match status" value="1"/>
</dbReference>
<dbReference type="SUPFAM" id="SSF52418">
    <property type="entry name" value="Nucleoside phosphorylase/phosphoribosyltransferase catalytic domain"/>
    <property type="match status" value="1"/>
</dbReference>
<dbReference type="SUPFAM" id="SSF47648">
    <property type="entry name" value="Nucleoside phosphorylase/phosphoribosyltransferase N-terminal domain"/>
    <property type="match status" value="1"/>
</dbReference>
<protein>
    <recommendedName>
        <fullName evidence="1">Anthranilate phosphoribosyltransferase</fullName>
        <ecNumber evidence="1">2.4.2.18</ecNumber>
    </recommendedName>
</protein>
<accession>B5Z8S5</accession>
<keyword id="KW-0028">Amino-acid biosynthesis</keyword>
<keyword id="KW-0057">Aromatic amino acid biosynthesis</keyword>
<keyword id="KW-0328">Glycosyltransferase</keyword>
<keyword id="KW-0460">Magnesium</keyword>
<keyword id="KW-0479">Metal-binding</keyword>
<keyword id="KW-1185">Reference proteome</keyword>
<keyword id="KW-0808">Transferase</keyword>
<keyword id="KW-0822">Tryptophan biosynthesis</keyword>
<comment type="function">
    <text evidence="1">Catalyzes the transfer of the phosphoribosyl group of 5-phosphorylribose-1-pyrophosphate (PRPP) to anthranilate to yield N-(5'-phosphoribosyl)-anthranilate (PRA).</text>
</comment>
<comment type="catalytic activity">
    <reaction evidence="1">
        <text>N-(5-phospho-beta-D-ribosyl)anthranilate + diphosphate = 5-phospho-alpha-D-ribose 1-diphosphate + anthranilate</text>
        <dbReference type="Rhea" id="RHEA:11768"/>
        <dbReference type="ChEBI" id="CHEBI:16567"/>
        <dbReference type="ChEBI" id="CHEBI:18277"/>
        <dbReference type="ChEBI" id="CHEBI:33019"/>
        <dbReference type="ChEBI" id="CHEBI:58017"/>
        <dbReference type="EC" id="2.4.2.18"/>
    </reaction>
</comment>
<comment type="cofactor">
    <cofactor evidence="1">
        <name>Mg(2+)</name>
        <dbReference type="ChEBI" id="CHEBI:18420"/>
    </cofactor>
    <text evidence="1">Binds 2 magnesium ions per monomer.</text>
</comment>
<comment type="pathway">
    <text evidence="1">Amino-acid biosynthesis; L-tryptophan biosynthesis; L-tryptophan from chorismate: step 2/5.</text>
</comment>
<comment type="subunit">
    <text evidence="1">Homodimer.</text>
</comment>
<comment type="similarity">
    <text evidence="1">Belongs to the anthranilate phosphoribosyltransferase family.</text>
</comment>
<evidence type="ECO:0000255" key="1">
    <source>
        <dbReference type="HAMAP-Rule" id="MF_00211"/>
    </source>
</evidence>
<organism>
    <name type="scientific">Helicobacter pylori (strain G27)</name>
    <dbReference type="NCBI Taxonomy" id="563041"/>
    <lineage>
        <taxon>Bacteria</taxon>
        <taxon>Pseudomonadati</taxon>
        <taxon>Campylobacterota</taxon>
        <taxon>Epsilonproteobacteria</taxon>
        <taxon>Campylobacterales</taxon>
        <taxon>Helicobacteraceae</taxon>
        <taxon>Helicobacter</taxon>
    </lineage>
</organism>
<reference key="1">
    <citation type="journal article" date="2009" name="J. Bacteriol.">
        <title>The complete genome sequence of Helicobacter pylori strain G27.</title>
        <authorList>
            <person name="Baltrus D.A."/>
            <person name="Amieva M.R."/>
            <person name="Covacci A."/>
            <person name="Lowe T.M."/>
            <person name="Merrell D.S."/>
            <person name="Ottemann K.M."/>
            <person name="Stein M."/>
            <person name="Salama N.R."/>
            <person name="Guillemin K."/>
        </authorList>
    </citation>
    <scope>NUCLEOTIDE SEQUENCE [LARGE SCALE GENOMIC DNA]</scope>
    <source>
        <strain>G27</strain>
    </source>
</reference>
<proteinExistence type="inferred from homology"/>
<sequence length="335" mass="36788">MKDILNALYHQKDLNDGEVKKLFTLIIHEKVSPVQLGAILCALKIKGESFKEISVAATTLLEHAPKPFNSGLDLIDNCGTGGDGLKTINISTIAALIASSMGLPMAKHGSRSVSSHSGSADLLENLGVNIEMNPMQLENCFKQTHFGFLFAPLYHQSFKKSAPLRKELFTKTIFNCLGPLINPLRPKIQLLGVYDKSLCKTMALALKALGVKRAMVVNGGGTDEIVLHDITHACELKNNKILEYDLSAKDFDLPPYDLKELQIENAKESVQACLDILENKGKDSHTMVVVANVASLLYLSHKAKDLKEGVNMTLEHLKTKAPYVHLQKIIRLSHA</sequence>
<name>TRPD_HELPG</name>
<feature type="chain" id="PRO_1000099811" description="Anthranilate phosphoribosyltransferase">
    <location>
        <begin position="1"/>
        <end position="335"/>
    </location>
</feature>
<feature type="binding site" evidence="1">
    <location>
        <position position="79"/>
    </location>
    <ligand>
        <name>5-phospho-alpha-D-ribose 1-diphosphate</name>
        <dbReference type="ChEBI" id="CHEBI:58017"/>
    </ligand>
</feature>
<feature type="binding site" evidence="1">
    <location>
        <position position="79"/>
    </location>
    <ligand>
        <name>anthranilate</name>
        <dbReference type="ChEBI" id="CHEBI:16567"/>
        <label>1</label>
    </ligand>
</feature>
<feature type="binding site" evidence="1">
    <location>
        <begin position="82"/>
        <end position="83"/>
    </location>
    <ligand>
        <name>5-phospho-alpha-D-ribose 1-diphosphate</name>
        <dbReference type="ChEBI" id="CHEBI:58017"/>
    </ligand>
</feature>
<feature type="binding site" evidence="1">
    <location>
        <position position="87"/>
    </location>
    <ligand>
        <name>5-phospho-alpha-D-ribose 1-diphosphate</name>
        <dbReference type="ChEBI" id="CHEBI:58017"/>
    </ligand>
</feature>
<feature type="binding site" evidence="1">
    <location>
        <begin position="89"/>
        <end position="92"/>
    </location>
    <ligand>
        <name>5-phospho-alpha-D-ribose 1-diphosphate</name>
        <dbReference type="ChEBI" id="CHEBI:58017"/>
    </ligand>
</feature>
<feature type="binding site" evidence="1">
    <location>
        <position position="91"/>
    </location>
    <ligand>
        <name>Mg(2+)</name>
        <dbReference type="ChEBI" id="CHEBI:18420"/>
        <label>1</label>
    </ligand>
</feature>
<feature type="binding site" evidence="1">
    <location>
        <begin position="107"/>
        <end position="115"/>
    </location>
    <ligand>
        <name>5-phospho-alpha-D-ribose 1-diphosphate</name>
        <dbReference type="ChEBI" id="CHEBI:58017"/>
    </ligand>
</feature>
<feature type="binding site" evidence="1">
    <location>
        <position position="119"/>
    </location>
    <ligand>
        <name>5-phospho-alpha-D-ribose 1-diphosphate</name>
        <dbReference type="ChEBI" id="CHEBI:58017"/>
    </ligand>
</feature>
<feature type="binding site" evidence="1">
    <location>
        <position position="165"/>
    </location>
    <ligand>
        <name>anthranilate</name>
        <dbReference type="ChEBI" id="CHEBI:16567"/>
        <label>2</label>
    </ligand>
</feature>
<feature type="binding site" evidence="1">
    <location>
        <position position="223"/>
    </location>
    <ligand>
        <name>Mg(2+)</name>
        <dbReference type="ChEBI" id="CHEBI:18420"/>
        <label>2</label>
    </ligand>
</feature>
<feature type="binding site" evidence="1">
    <location>
        <position position="224"/>
    </location>
    <ligand>
        <name>Mg(2+)</name>
        <dbReference type="ChEBI" id="CHEBI:18420"/>
        <label>1</label>
    </ligand>
</feature>
<feature type="binding site" evidence="1">
    <location>
        <position position="224"/>
    </location>
    <ligand>
        <name>Mg(2+)</name>
        <dbReference type="ChEBI" id="CHEBI:18420"/>
        <label>2</label>
    </ligand>
</feature>
<gene>
    <name evidence="1" type="primary">trpD</name>
    <name type="ordered locus">HPG27_1226</name>
</gene>